<feature type="chain" id="PRO_1000052218" description="Large ribosomal subunit protein uL24">
    <location>
        <begin position="1"/>
        <end position="105"/>
    </location>
</feature>
<organism>
    <name type="scientific">Francisella tularensis subsp. holarctica (strain OSU18)</name>
    <dbReference type="NCBI Taxonomy" id="393011"/>
    <lineage>
        <taxon>Bacteria</taxon>
        <taxon>Pseudomonadati</taxon>
        <taxon>Pseudomonadota</taxon>
        <taxon>Gammaproteobacteria</taxon>
        <taxon>Thiotrichales</taxon>
        <taxon>Francisellaceae</taxon>
        <taxon>Francisella</taxon>
    </lineage>
</organism>
<evidence type="ECO:0000255" key="1">
    <source>
        <dbReference type="HAMAP-Rule" id="MF_01326"/>
    </source>
</evidence>
<evidence type="ECO:0000305" key="2"/>
<proteinExistence type="inferred from homology"/>
<protein>
    <recommendedName>
        <fullName evidence="1">Large ribosomal subunit protein uL24</fullName>
    </recommendedName>
    <alternativeName>
        <fullName evidence="2">50S ribosomal protein L24</fullName>
    </alternativeName>
</protein>
<comment type="function">
    <text evidence="1">One of two assembly initiator proteins, it binds directly to the 5'-end of the 23S rRNA, where it nucleates assembly of the 50S subunit.</text>
</comment>
<comment type="function">
    <text evidence="1">One of the proteins that surrounds the polypeptide exit tunnel on the outside of the subunit.</text>
</comment>
<comment type="subunit">
    <text evidence="1">Part of the 50S ribosomal subunit.</text>
</comment>
<comment type="similarity">
    <text evidence="1">Belongs to the universal ribosomal protein uL24 family.</text>
</comment>
<accession>Q0BNR6</accession>
<name>RL24_FRATO</name>
<gene>
    <name evidence="1" type="primary">rplX</name>
    <name type="ordered locus">FTH_0242</name>
</gene>
<dbReference type="EMBL" id="CP000437">
    <property type="protein sequence ID" value="ABI82268.1"/>
    <property type="molecule type" value="Genomic_DNA"/>
</dbReference>
<dbReference type="RefSeq" id="WP_003014349.1">
    <property type="nucleotide sequence ID" value="NC_017463.1"/>
</dbReference>
<dbReference type="SMR" id="Q0BNR6"/>
<dbReference type="GeneID" id="75264250"/>
<dbReference type="KEGG" id="fth:FTH_0242"/>
<dbReference type="GO" id="GO:1990904">
    <property type="term" value="C:ribonucleoprotein complex"/>
    <property type="evidence" value="ECO:0007669"/>
    <property type="project" value="UniProtKB-KW"/>
</dbReference>
<dbReference type="GO" id="GO:0005840">
    <property type="term" value="C:ribosome"/>
    <property type="evidence" value="ECO:0007669"/>
    <property type="project" value="UniProtKB-KW"/>
</dbReference>
<dbReference type="GO" id="GO:0019843">
    <property type="term" value="F:rRNA binding"/>
    <property type="evidence" value="ECO:0007669"/>
    <property type="project" value="UniProtKB-UniRule"/>
</dbReference>
<dbReference type="GO" id="GO:0003735">
    <property type="term" value="F:structural constituent of ribosome"/>
    <property type="evidence" value="ECO:0007669"/>
    <property type="project" value="InterPro"/>
</dbReference>
<dbReference type="GO" id="GO:0006412">
    <property type="term" value="P:translation"/>
    <property type="evidence" value="ECO:0007669"/>
    <property type="project" value="UniProtKB-UniRule"/>
</dbReference>
<dbReference type="CDD" id="cd06089">
    <property type="entry name" value="KOW_RPL26"/>
    <property type="match status" value="1"/>
</dbReference>
<dbReference type="FunFam" id="2.30.30.30:FF:000004">
    <property type="entry name" value="50S ribosomal protein L24"/>
    <property type="match status" value="1"/>
</dbReference>
<dbReference type="Gene3D" id="2.30.30.30">
    <property type="match status" value="1"/>
</dbReference>
<dbReference type="HAMAP" id="MF_01326_B">
    <property type="entry name" value="Ribosomal_uL24_B"/>
    <property type="match status" value="1"/>
</dbReference>
<dbReference type="InterPro" id="IPR005824">
    <property type="entry name" value="KOW"/>
</dbReference>
<dbReference type="InterPro" id="IPR014722">
    <property type="entry name" value="Rib_uL2_dom2"/>
</dbReference>
<dbReference type="InterPro" id="IPR003256">
    <property type="entry name" value="Ribosomal_uL24"/>
</dbReference>
<dbReference type="InterPro" id="IPR005825">
    <property type="entry name" value="Ribosomal_uL24_CS"/>
</dbReference>
<dbReference type="InterPro" id="IPR041988">
    <property type="entry name" value="Ribosomal_uL24_KOW"/>
</dbReference>
<dbReference type="InterPro" id="IPR008991">
    <property type="entry name" value="Translation_prot_SH3-like_sf"/>
</dbReference>
<dbReference type="NCBIfam" id="TIGR01079">
    <property type="entry name" value="rplX_bact"/>
    <property type="match status" value="1"/>
</dbReference>
<dbReference type="PANTHER" id="PTHR12903">
    <property type="entry name" value="MITOCHONDRIAL RIBOSOMAL PROTEIN L24"/>
    <property type="match status" value="1"/>
</dbReference>
<dbReference type="Pfam" id="PF00467">
    <property type="entry name" value="KOW"/>
    <property type="match status" value="1"/>
</dbReference>
<dbReference type="Pfam" id="PF17136">
    <property type="entry name" value="ribosomal_L24"/>
    <property type="match status" value="1"/>
</dbReference>
<dbReference type="SUPFAM" id="SSF50104">
    <property type="entry name" value="Translation proteins SH3-like domain"/>
    <property type="match status" value="1"/>
</dbReference>
<dbReference type="PROSITE" id="PS01108">
    <property type="entry name" value="RIBOSOMAL_L24"/>
    <property type="match status" value="1"/>
</dbReference>
<keyword id="KW-0687">Ribonucleoprotein</keyword>
<keyword id="KW-0689">Ribosomal protein</keyword>
<keyword id="KW-0694">RNA-binding</keyword>
<keyword id="KW-0699">rRNA-binding</keyword>
<reference key="1">
    <citation type="journal article" date="2006" name="J. Bacteriol.">
        <title>Chromosome rearrangement and diversification of Francisella tularensis revealed by the type B (OSU18) genome sequence.</title>
        <authorList>
            <person name="Petrosino J.F."/>
            <person name="Xiang Q."/>
            <person name="Karpathy S.E."/>
            <person name="Jiang H."/>
            <person name="Yerrapragada S."/>
            <person name="Liu Y."/>
            <person name="Gioia J."/>
            <person name="Hemphill L."/>
            <person name="Gonzalez A."/>
            <person name="Raghavan T.M."/>
            <person name="Uzman A."/>
            <person name="Fox G.E."/>
            <person name="Highlander S."/>
            <person name="Reichard M."/>
            <person name="Morton R.J."/>
            <person name="Clinkenbeard K.D."/>
            <person name="Weinstock G.M."/>
        </authorList>
    </citation>
    <scope>NUCLEOTIDE SEQUENCE [LARGE SCALE GENOMIC DNA]</scope>
    <source>
        <strain>OSU18</strain>
    </source>
</reference>
<sequence length="105" mass="11476">MNRLKKGDDVIVIAGKDKGRRGVVKSFAKGGSLVLVEGINIVKKHIKPNPNRGIEGGVVEKELPVDASNVAIFNPATEKADRVGYKFVDEKKVRYFKSNGELVDL</sequence>